<name>GM_HHV6U</name>
<reference key="1">
    <citation type="journal article" date="1995" name="J. Gen. Virol.">
        <title>Human herpesvirus 6 (strain U1102) encodes homologues of the conserved herpesvirus glycoprotein gM and the alphaherpesvirus origin-binding protein.</title>
        <authorList>
            <person name="Lawrence G.L."/>
            <person name="Nicholas J."/>
            <person name="Barrell B.G."/>
        </authorList>
    </citation>
    <scope>NUCLEOTIDE SEQUENCE [GENOMIC DNA]</scope>
</reference>
<reference key="2">
    <citation type="journal article" date="1995" name="Virology">
        <title>The DNA sequence of human herpesvirus-6: structure, coding content, and genome evolution.</title>
        <authorList>
            <person name="Gompels U.A."/>
            <person name="Nicholas J."/>
            <person name="Lawrence G.L."/>
            <person name="Jones M."/>
            <person name="Thomson B.J."/>
            <person name="Martin M.E.D."/>
            <person name="Efstathiou S."/>
            <person name="Craxton M.A."/>
            <person name="Macaulay H.A."/>
        </authorList>
    </citation>
    <scope>NUCLEOTIDE SEQUENCE [LARGE SCALE GENOMIC DNA]</scope>
</reference>
<organismHost>
    <name type="scientific">Homo sapiens</name>
    <name type="common">Human</name>
    <dbReference type="NCBI Taxonomy" id="9606"/>
</organismHost>
<organism>
    <name type="scientific">Human herpesvirus 6A (strain Uganda-1102)</name>
    <name type="common">HHV-6 variant A</name>
    <name type="synonym">Human B lymphotropic virus</name>
    <dbReference type="NCBI Taxonomy" id="10370"/>
    <lineage>
        <taxon>Viruses</taxon>
        <taxon>Duplodnaviria</taxon>
        <taxon>Heunggongvirae</taxon>
        <taxon>Peploviricota</taxon>
        <taxon>Herviviricetes</taxon>
        <taxon>Herpesvirales</taxon>
        <taxon>Orthoherpesviridae</taxon>
        <taxon>Betaherpesvirinae</taxon>
        <taxon>Roseolovirus</taxon>
        <taxon>Roseolovirus humanbeta6a</taxon>
        <taxon>Human betaherpesvirus 6A</taxon>
    </lineage>
</organism>
<comment type="function">
    <text evidence="1">Envelope glycoprotein important for virion assembly and egress. Plays a role in the correct incorporation of gH-gL into virion membrane. Directs the glycoprotein N (gN) to the host trans-Golgi network.</text>
</comment>
<comment type="subunit">
    <text evidence="1">Interacts (via N-terminus) with gN (via N-terminus). The gM-gN heterodimer forms the gCII complex.</text>
</comment>
<comment type="subcellular location">
    <subcellularLocation>
        <location evidence="1">Virion membrane</location>
        <topology evidence="1">Multi-pass membrane protein</topology>
    </subcellularLocation>
    <subcellularLocation>
        <location evidence="1">Host Golgi apparatus</location>
        <location evidence="1">Host trans-Golgi network</location>
    </subcellularLocation>
    <subcellularLocation>
        <location evidence="1">Host endosome membrane</location>
        <topology evidence="1">Multi-pass membrane protein</topology>
    </subcellularLocation>
    <subcellularLocation>
        <location evidence="1">Host nucleus inner membrane</location>
        <topology evidence="1">Multi-pass membrane protein</topology>
    </subcellularLocation>
    <text evidence="1">During virion morphogenesis, this protein accumulates in the trans-Golgi network where secondary envelopment occurs.</text>
</comment>
<comment type="similarity">
    <text evidence="1">Belongs to the herpesviridae glycoprotein M family.</text>
</comment>
<dbReference type="EMBL" id="M68963">
    <property type="protein sequence ID" value="AAA65580.1"/>
    <property type="molecule type" value="Genomic_DNA"/>
</dbReference>
<dbReference type="EMBL" id="X83413">
    <property type="protein sequence ID" value="CAA58364.1"/>
    <property type="molecule type" value="Genomic_DNA"/>
</dbReference>
<dbReference type="RefSeq" id="NP_042965.1">
    <property type="nucleotide sequence ID" value="NC_001664.2"/>
</dbReference>
<dbReference type="DNASU" id="1487953"/>
<dbReference type="GeneID" id="1487953"/>
<dbReference type="KEGG" id="vg:1487953"/>
<dbReference type="Proteomes" id="UP000009295">
    <property type="component" value="Segment"/>
</dbReference>
<dbReference type="GO" id="GO:0044175">
    <property type="term" value="C:host cell endosome membrane"/>
    <property type="evidence" value="ECO:0007669"/>
    <property type="project" value="UniProtKB-SubCell"/>
</dbReference>
<dbReference type="GO" id="GO:0044177">
    <property type="term" value="C:host cell Golgi apparatus"/>
    <property type="evidence" value="ECO:0007669"/>
    <property type="project" value="UniProtKB-SubCell"/>
</dbReference>
<dbReference type="GO" id="GO:0044201">
    <property type="term" value="C:host cell nuclear inner membrane"/>
    <property type="evidence" value="ECO:0007669"/>
    <property type="project" value="UniProtKB-SubCell"/>
</dbReference>
<dbReference type="GO" id="GO:0016020">
    <property type="term" value="C:membrane"/>
    <property type="evidence" value="ECO:0007669"/>
    <property type="project" value="UniProtKB-KW"/>
</dbReference>
<dbReference type="GO" id="GO:0019031">
    <property type="term" value="C:viral envelope"/>
    <property type="evidence" value="ECO:0007669"/>
    <property type="project" value="UniProtKB-KW"/>
</dbReference>
<dbReference type="GO" id="GO:0055036">
    <property type="term" value="C:virion membrane"/>
    <property type="evidence" value="ECO:0007669"/>
    <property type="project" value="UniProtKB-SubCell"/>
</dbReference>
<dbReference type="HAMAP" id="MF_04035">
    <property type="entry name" value="HSV_GM"/>
    <property type="match status" value="1"/>
</dbReference>
<dbReference type="InterPro" id="IPR000785">
    <property type="entry name" value="Herpes_glycop_M"/>
</dbReference>
<dbReference type="Pfam" id="PF01528">
    <property type="entry name" value="Herpes_glycop"/>
    <property type="match status" value="1"/>
</dbReference>
<dbReference type="PRINTS" id="PR00333">
    <property type="entry name" value="HSVINTEGRLMP"/>
</dbReference>
<keyword id="KW-1015">Disulfide bond</keyword>
<keyword id="KW-0325">Glycoprotein</keyword>
<keyword id="KW-1039">Host endosome</keyword>
<keyword id="KW-1040">Host Golgi apparatus</keyword>
<keyword id="KW-1043">Host membrane</keyword>
<keyword id="KW-1048">Host nucleus</keyword>
<keyword id="KW-0472">Membrane</keyword>
<keyword id="KW-1185">Reference proteome</keyword>
<keyword id="KW-0812">Transmembrane</keyword>
<keyword id="KW-1133">Transmembrane helix</keyword>
<keyword id="KW-0261">Viral envelope protein</keyword>
<keyword id="KW-0946">Virion</keyword>
<protein>
    <recommendedName>
        <fullName evidence="1">Envelope glycoprotein M</fullName>
        <shortName evidence="1">gM</shortName>
    </recommendedName>
</protein>
<gene>
    <name evidence="1" type="primary">gM</name>
    <name type="ORF">18L</name>
    <name type="ORF">U72</name>
</gene>
<evidence type="ECO:0000255" key="1">
    <source>
        <dbReference type="HAMAP-Rule" id="MF_04035"/>
    </source>
</evidence>
<feature type="chain" id="PRO_0000115779" description="Envelope glycoprotein M">
    <location>
        <begin position="1"/>
        <end position="344"/>
    </location>
</feature>
<feature type="topological domain" description="Intravirion" evidence="1">
    <location>
        <begin position="1"/>
        <end position="12"/>
    </location>
</feature>
<feature type="transmembrane region" description="Helical" evidence="1">
    <location>
        <begin position="13"/>
        <end position="33"/>
    </location>
</feature>
<feature type="topological domain" description="Virion surface" evidence="1">
    <location>
        <begin position="34"/>
        <end position="76"/>
    </location>
</feature>
<feature type="transmembrane region" description="Helical" evidence="1">
    <location>
        <begin position="77"/>
        <end position="97"/>
    </location>
</feature>
<feature type="topological domain" description="Intravirion" evidence="1">
    <location>
        <begin position="98"/>
        <end position="125"/>
    </location>
</feature>
<feature type="transmembrane region" description="Helical" evidence="1">
    <location>
        <begin position="126"/>
        <end position="146"/>
    </location>
</feature>
<feature type="topological domain" description="Virion surface" evidence="1">
    <location>
        <position position="147"/>
    </location>
</feature>
<feature type="transmembrane region" description="Helical" evidence="1">
    <location>
        <begin position="148"/>
        <end position="168"/>
    </location>
</feature>
<feature type="topological domain" description="Intravirion" evidence="1">
    <location>
        <begin position="169"/>
        <end position="203"/>
    </location>
</feature>
<feature type="transmembrane region" description="Helical" evidence="1">
    <location>
        <begin position="204"/>
        <end position="224"/>
    </location>
</feature>
<feature type="topological domain" description="Virion surface" evidence="1">
    <location>
        <begin position="225"/>
        <end position="238"/>
    </location>
</feature>
<feature type="transmembrane region" description="Helical" evidence="1">
    <location>
        <begin position="239"/>
        <end position="259"/>
    </location>
</feature>
<feature type="topological domain" description="Intravirion" evidence="1">
    <location>
        <begin position="260"/>
        <end position="263"/>
    </location>
</feature>
<feature type="transmembrane region" description="Helical" evidence="1">
    <location>
        <begin position="264"/>
        <end position="284"/>
    </location>
</feature>
<feature type="topological domain" description="Virion surface" evidence="1">
    <location>
        <begin position="285"/>
        <end position="293"/>
    </location>
</feature>
<feature type="transmembrane region" description="Helical" evidence="1">
    <location>
        <begin position="294"/>
        <end position="314"/>
    </location>
</feature>
<feature type="topological domain" description="Intravirion" evidence="1">
    <location>
        <begin position="315"/>
        <end position="344"/>
    </location>
</feature>
<feature type="disulfide bond" description="Interchain (with gN)" evidence="1">
    <location>
        <position position="44"/>
    </location>
</feature>
<sequence>MASSRVDTINLRIWLVSIICAALSFINVTVYLIAINFPNLGFPCAYFEINDLKAVNLSANNQIYQMTHQLYINPVQIICYVLIMAMLFLLIIIYYIVCCAKVFSSNKTSNVNQTTRDITWMGDTSSCFQFILIMDTFQLFVTALSFRLVALGAFAYCIFFVCFTTFNVTLITQFQSADKSFFAFQKIHPNLKGTVQFKTVVINLTELMLGYSTMFLGITTCLGVGNSIYIRSITVAYSSINTFLVMACIYSIVIEAVLVRYVKPLFGYYVGMFCGAVGLSFPILQYETFFESEWSTGLIINLAVIAIISIGFIICRLVRYLVKKKRRYKQLVNTESSSLMDENE</sequence>
<accession>Q04630</accession>
<proteinExistence type="inferred from homology"/>